<protein>
    <recommendedName>
        <fullName evidence="1">Large ribosomal subunit protein uL10</fullName>
    </recommendedName>
    <alternativeName>
        <fullName evidence="3">50S ribosomal protein L10</fullName>
    </alternativeName>
    <alternativeName>
        <fullName evidence="1">Acidic ribosomal protein P0 homolog</fullName>
    </alternativeName>
</protein>
<keyword id="KW-1185">Reference proteome</keyword>
<keyword id="KW-0687">Ribonucleoprotein</keyword>
<keyword id="KW-0689">Ribosomal protein</keyword>
<keyword id="KW-0694">RNA-binding</keyword>
<keyword id="KW-0699">rRNA-binding</keyword>
<comment type="function">
    <text evidence="1">Forms part of the ribosomal stalk, playing a central role in the interaction of the ribosome with GTP-bound translation factors.</text>
</comment>
<comment type="subunit">
    <text evidence="1">Part of the 50S ribosomal subunit. Forms part of the ribosomal stalk which helps the ribosome interact with GTP-bound translation factors. Forms a heptameric L10(L12)2(L12)2(L12)2 complex, where L10 forms an elongated spine to which the L12 dimers bind in a sequential fashion.</text>
</comment>
<comment type="similarity">
    <text evidence="1">Belongs to the universal ribosomal protein uL10 family.</text>
</comment>
<accession>C6A1F5</accession>
<dbReference type="EMBL" id="CP001463">
    <property type="protein sequence ID" value="ACS89450.1"/>
    <property type="molecule type" value="Genomic_DNA"/>
</dbReference>
<dbReference type="RefSeq" id="WP_015848670.1">
    <property type="nucleotide sequence ID" value="NC_012883.1"/>
</dbReference>
<dbReference type="SMR" id="C6A1F5"/>
<dbReference type="STRING" id="604354.TSIB_0384"/>
<dbReference type="GeneID" id="8095361"/>
<dbReference type="KEGG" id="tsi:TSIB_0384"/>
<dbReference type="eggNOG" id="arCOG04288">
    <property type="taxonomic scope" value="Archaea"/>
</dbReference>
<dbReference type="HOGENOM" id="CLU_053173_0_0_2"/>
<dbReference type="OrthoDB" id="30930at2157"/>
<dbReference type="Proteomes" id="UP000009079">
    <property type="component" value="Chromosome"/>
</dbReference>
<dbReference type="GO" id="GO:0022625">
    <property type="term" value="C:cytosolic large ribosomal subunit"/>
    <property type="evidence" value="ECO:0007669"/>
    <property type="project" value="TreeGrafter"/>
</dbReference>
<dbReference type="GO" id="GO:0070180">
    <property type="term" value="F:large ribosomal subunit rRNA binding"/>
    <property type="evidence" value="ECO:0007669"/>
    <property type="project" value="UniProtKB-UniRule"/>
</dbReference>
<dbReference type="GO" id="GO:0003735">
    <property type="term" value="F:structural constituent of ribosome"/>
    <property type="evidence" value="ECO:0007669"/>
    <property type="project" value="TreeGrafter"/>
</dbReference>
<dbReference type="GO" id="GO:0002181">
    <property type="term" value="P:cytoplasmic translation"/>
    <property type="evidence" value="ECO:0007669"/>
    <property type="project" value="TreeGrafter"/>
</dbReference>
<dbReference type="GO" id="GO:0000027">
    <property type="term" value="P:ribosomal large subunit assembly"/>
    <property type="evidence" value="ECO:0007669"/>
    <property type="project" value="TreeGrafter"/>
</dbReference>
<dbReference type="CDD" id="cd05795">
    <property type="entry name" value="Ribosomal_P0_L10e"/>
    <property type="match status" value="1"/>
</dbReference>
<dbReference type="FunFam" id="3.90.105.20:FF:000001">
    <property type="entry name" value="60S acidic ribosomal protein P0"/>
    <property type="match status" value="1"/>
</dbReference>
<dbReference type="Gene3D" id="3.30.70.1730">
    <property type="match status" value="1"/>
</dbReference>
<dbReference type="Gene3D" id="3.90.105.20">
    <property type="match status" value="1"/>
</dbReference>
<dbReference type="Gene3D" id="6.10.140.760">
    <property type="match status" value="1"/>
</dbReference>
<dbReference type="HAMAP" id="MF_00280">
    <property type="entry name" value="Ribosomal_uL10_arch"/>
    <property type="match status" value="1"/>
</dbReference>
<dbReference type="InterPro" id="IPR050323">
    <property type="entry name" value="Ribosomal_protein_uL10"/>
</dbReference>
<dbReference type="InterPro" id="IPR001790">
    <property type="entry name" value="Ribosomal_uL10"/>
</dbReference>
<dbReference type="InterPro" id="IPR040637">
    <property type="entry name" value="Ribosomal_uL10-like_insert"/>
</dbReference>
<dbReference type="InterPro" id="IPR043164">
    <property type="entry name" value="Ribosomal_uL10-like_insert_sf"/>
</dbReference>
<dbReference type="InterPro" id="IPR043141">
    <property type="entry name" value="Ribosomal_uL10-like_sf"/>
</dbReference>
<dbReference type="InterPro" id="IPR022909">
    <property type="entry name" value="Ribosomal_uL10_arc"/>
</dbReference>
<dbReference type="NCBIfam" id="NF003096">
    <property type="entry name" value="PRK04019.1-2"/>
    <property type="match status" value="1"/>
</dbReference>
<dbReference type="NCBIfam" id="NF003098">
    <property type="entry name" value="PRK04019.1-5"/>
    <property type="match status" value="1"/>
</dbReference>
<dbReference type="PANTHER" id="PTHR45699">
    <property type="entry name" value="60S ACIDIC RIBOSOMAL PROTEIN P0"/>
    <property type="match status" value="1"/>
</dbReference>
<dbReference type="PANTHER" id="PTHR45699:SF3">
    <property type="entry name" value="LARGE RIBOSOMAL SUBUNIT PROTEIN UL10"/>
    <property type="match status" value="1"/>
</dbReference>
<dbReference type="Pfam" id="PF00466">
    <property type="entry name" value="Ribosomal_L10"/>
    <property type="match status" value="1"/>
</dbReference>
<dbReference type="Pfam" id="PF17777">
    <property type="entry name" value="RL10P_insert"/>
    <property type="match status" value="1"/>
</dbReference>
<dbReference type="SUPFAM" id="SSF160369">
    <property type="entry name" value="Ribosomal protein L10-like"/>
    <property type="match status" value="1"/>
</dbReference>
<feature type="chain" id="PRO_1000204819" description="Large ribosomal subunit protein uL10">
    <location>
        <begin position="1"/>
        <end position="338"/>
    </location>
</feature>
<feature type="region of interest" description="Disordered" evidence="2">
    <location>
        <begin position="302"/>
        <end position="338"/>
    </location>
</feature>
<feature type="compositionally biased region" description="Acidic residues" evidence="2">
    <location>
        <begin position="310"/>
        <end position="329"/>
    </location>
</feature>
<organism>
    <name type="scientific">Thermococcus sibiricus (strain DSM 12597 / MM 739)</name>
    <dbReference type="NCBI Taxonomy" id="604354"/>
    <lineage>
        <taxon>Archaea</taxon>
        <taxon>Methanobacteriati</taxon>
        <taxon>Methanobacteriota</taxon>
        <taxon>Thermococci</taxon>
        <taxon>Thermococcales</taxon>
        <taxon>Thermococcaceae</taxon>
        <taxon>Thermococcus</taxon>
    </lineage>
</organism>
<reference key="1">
    <citation type="journal article" date="2009" name="Appl. Environ. Microbiol.">
        <title>Metabolic versatility and indigenous origin of the archaeon Thermococcus sibiricus, isolated from a siberian oil reservoir, as revealed by genome analysis.</title>
        <authorList>
            <person name="Mardanov A.V."/>
            <person name="Ravin N.V."/>
            <person name="Svetlitchnyi V.A."/>
            <person name="Beletsky A.V."/>
            <person name="Miroshnichenko M.L."/>
            <person name="Bonch-Osmolovskaya E.A."/>
            <person name="Skryabin K.G."/>
        </authorList>
    </citation>
    <scope>NUCLEOTIDE SEQUENCE [LARGE SCALE GENOMIC DNA]</scope>
    <source>
        <strain>DSM 12597 / MM 739</strain>
    </source>
</reference>
<sequence length="338" mass="36918">MAHVAEWKKKEVEELTKLLQDYPVIALVDVADVPAYPLSKMRESLRDKAVLRVSRNTLIELALKKAAQELNDSNLEKLIEHIQGGTGILVTKINPFKLYKFLEESKKPAPAKAGAPAPRDVVVPAGPTPLSPGPLVGEMQALGIPARIEKGKVSIQKDTVVLKAGEIITPQLANILNQLGIEPLEVGLKLLAAYEHGIVYTPEVLAIDEEQYISMLQQAYMHAFNLSVNVAYPTKQTIEAIIQKAFLGAKNVAVEAGYITKESAGDILGKAFRIALLIAQELPEELLDEKTKELLNQQAQVIAAQPQPAEEAEEKVEEEEEEEKEEEEALAGLGALFG</sequence>
<gene>
    <name evidence="1" type="primary">rpl10</name>
    <name evidence="1" type="synonym">rplP0</name>
    <name type="ordered locus">TSIB_0384</name>
</gene>
<evidence type="ECO:0000255" key="1">
    <source>
        <dbReference type="HAMAP-Rule" id="MF_00280"/>
    </source>
</evidence>
<evidence type="ECO:0000256" key="2">
    <source>
        <dbReference type="SAM" id="MobiDB-lite"/>
    </source>
</evidence>
<evidence type="ECO:0000305" key="3"/>
<proteinExistence type="inferred from homology"/>
<name>RL10_THESM</name>